<gene>
    <name type="primary">RBOHA</name>
    <name type="ordered locus">At5g07390</name>
    <name type="ORF">T2I1.100</name>
</gene>
<proteinExistence type="evidence at transcript level"/>
<evidence type="ECO:0000250" key="1"/>
<evidence type="ECO:0000250" key="2">
    <source>
        <dbReference type="UniProtKB" id="Q9FIJ0"/>
    </source>
</evidence>
<evidence type="ECO:0000255" key="3"/>
<evidence type="ECO:0000255" key="4">
    <source>
        <dbReference type="PROSITE-ProRule" id="PRU00448"/>
    </source>
</evidence>
<evidence type="ECO:0000255" key="5">
    <source>
        <dbReference type="PROSITE-ProRule" id="PRU00716"/>
    </source>
</evidence>
<evidence type="ECO:0000256" key="6">
    <source>
        <dbReference type="SAM" id="MobiDB-lite"/>
    </source>
</evidence>
<evidence type="ECO:0000305" key="7"/>
<accession>O81209</accession>
<accession>Q9LY21</accession>
<comment type="function">
    <text>Calcium-dependent NADPH oxidase that generates superoxide.</text>
</comment>
<comment type="subunit">
    <text evidence="1">Monomer and homodimer.</text>
</comment>
<comment type="subcellular location">
    <subcellularLocation>
        <location evidence="7">Membrane</location>
        <topology evidence="7">Multi-pass membrane protein</topology>
    </subcellularLocation>
</comment>
<comment type="alternative products">
    <event type="alternative splicing"/>
    <isoform>
        <id>O81209-1</id>
        <name>1</name>
        <sequence type="displayed"/>
    </isoform>
    <text>A number of isoforms are produced. According to EST sequences.</text>
</comment>
<comment type="similarity">
    <text evidence="7">Belongs to the RBOH (TC 5.B.1.3) family.</text>
</comment>
<name>RBOHA_ARATH</name>
<reference key="1">
    <citation type="journal article" date="1998" name="Plant J.">
        <title>Six Arabidopsis thaliana homologues of the human respiratory burst oxidase (gp91phox).</title>
        <authorList>
            <person name="Torres M.A."/>
            <person name="Onouchi H."/>
            <person name="Hamada S."/>
            <person name="Machida C."/>
            <person name="Hammond-Kosack K.E."/>
            <person name="Jones J.D.G."/>
        </authorList>
    </citation>
    <scope>NUCLEOTIDE SEQUENCE [GENOMIC DNA]</scope>
    <scope>TISSUE SPECIFICITY</scope>
    <source>
        <strain>cv. Landsberg erecta</strain>
    </source>
</reference>
<reference key="2">
    <citation type="journal article" date="2000" name="Nature">
        <title>Sequence and analysis of chromosome 5 of the plant Arabidopsis thaliana.</title>
        <authorList>
            <person name="Tabata S."/>
            <person name="Kaneko T."/>
            <person name="Nakamura Y."/>
            <person name="Kotani H."/>
            <person name="Kato T."/>
            <person name="Asamizu E."/>
            <person name="Miyajima N."/>
            <person name="Sasamoto S."/>
            <person name="Kimura T."/>
            <person name="Hosouchi T."/>
            <person name="Kawashima K."/>
            <person name="Kohara M."/>
            <person name="Matsumoto M."/>
            <person name="Matsuno A."/>
            <person name="Muraki A."/>
            <person name="Nakayama S."/>
            <person name="Nakazaki N."/>
            <person name="Naruo K."/>
            <person name="Okumura S."/>
            <person name="Shinpo S."/>
            <person name="Takeuchi C."/>
            <person name="Wada T."/>
            <person name="Watanabe A."/>
            <person name="Yamada M."/>
            <person name="Yasuda M."/>
            <person name="Sato S."/>
            <person name="de la Bastide M."/>
            <person name="Huang E."/>
            <person name="Spiegel L."/>
            <person name="Gnoj L."/>
            <person name="O'Shaughnessy A."/>
            <person name="Preston R."/>
            <person name="Habermann K."/>
            <person name="Murray J."/>
            <person name="Johnson D."/>
            <person name="Rohlfing T."/>
            <person name="Nelson J."/>
            <person name="Stoneking T."/>
            <person name="Pepin K."/>
            <person name="Spieth J."/>
            <person name="Sekhon M."/>
            <person name="Armstrong J."/>
            <person name="Becker M."/>
            <person name="Belter E."/>
            <person name="Cordum H."/>
            <person name="Cordes M."/>
            <person name="Courtney L."/>
            <person name="Courtney W."/>
            <person name="Dante M."/>
            <person name="Du H."/>
            <person name="Edwards J."/>
            <person name="Fryman J."/>
            <person name="Haakensen B."/>
            <person name="Lamar E."/>
            <person name="Latreille P."/>
            <person name="Leonard S."/>
            <person name="Meyer R."/>
            <person name="Mulvaney E."/>
            <person name="Ozersky P."/>
            <person name="Riley A."/>
            <person name="Strowmatt C."/>
            <person name="Wagner-McPherson C."/>
            <person name="Wollam A."/>
            <person name="Yoakum M."/>
            <person name="Bell M."/>
            <person name="Dedhia N."/>
            <person name="Parnell L."/>
            <person name="Shah R."/>
            <person name="Rodriguez M."/>
            <person name="Hoon See L."/>
            <person name="Vil D."/>
            <person name="Baker J."/>
            <person name="Kirchoff K."/>
            <person name="Toth K."/>
            <person name="King L."/>
            <person name="Bahret A."/>
            <person name="Miller B."/>
            <person name="Marra M.A."/>
            <person name="Martienssen R."/>
            <person name="McCombie W.R."/>
            <person name="Wilson R.K."/>
            <person name="Murphy G."/>
            <person name="Bancroft I."/>
            <person name="Volckaert G."/>
            <person name="Wambutt R."/>
            <person name="Duesterhoeft A."/>
            <person name="Stiekema W."/>
            <person name="Pohl T."/>
            <person name="Entian K.-D."/>
            <person name="Terryn N."/>
            <person name="Hartley N."/>
            <person name="Bent E."/>
            <person name="Johnson S."/>
            <person name="Langham S.-A."/>
            <person name="McCullagh B."/>
            <person name="Robben J."/>
            <person name="Grymonprez B."/>
            <person name="Zimmermann W."/>
            <person name="Ramsperger U."/>
            <person name="Wedler H."/>
            <person name="Balke K."/>
            <person name="Wedler E."/>
            <person name="Peters S."/>
            <person name="van Staveren M."/>
            <person name="Dirkse W."/>
            <person name="Mooijman P."/>
            <person name="Klein Lankhorst R."/>
            <person name="Weitzenegger T."/>
            <person name="Bothe G."/>
            <person name="Rose M."/>
            <person name="Hauf J."/>
            <person name="Berneiser S."/>
            <person name="Hempel S."/>
            <person name="Feldpausch M."/>
            <person name="Lamberth S."/>
            <person name="Villarroel R."/>
            <person name="Gielen J."/>
            <person name="Ardiles W."/>
            <person name="Bents O."/>
            <person name="Lemcke K."/>
            <person name="Kolesov G."/>
            <person name="Mayer K.F.X."/>
            <person name="Rudd S."/>
            <person name="Schoof H."/>
            <person name="Schueller C."/>
            <person name="Zaccaria P."/>
            <person name="Mewes H.-W."/>
            <person name="Bevan M."/>
            <person name="Fransz P.F."/>
        </authorList>
    </citation>
    <scope>NUCLEOTIDE SEQUENCE [LARGE SCALE GENOMIC DNA]</scope>
    <source>
        <strain>cv. Columbia</strain>
    </source>
</reference>
<reference key="3">
    <citation type="journal article" date="2017" name="Plant J.">
        <title>Araport11: a complete reannotation of the Arabidopsis thaliana reference genome.</title>
        <authorList>
            <person name="Cheng C.Y."/>
            <person name="Krishnakumar V."/>
            <person name="Chan A.P."/>
            <person name="Thibaud-Nissen F."/>
            <person name="Schobel S."/>
            <person name="Town C.D."/>
        </authorList>
    </citation>
    <scope>GENOME REANNOTATION</scope>
    <source>
        <strain>cv. Columbia</strain>
    </source>
</reference>
<reference key="4">
    <citation type="journal article" date="2003" name="Science">
        <title>Empirical analysis of transcriptional activity in the Arabidopsis genome.</title>
        <authorList>
            <person name="Yamada K."/>
            <person name="Lim J."/>
            <person name="Dale J.M."/>
            <person name="Chen H."/>
            <person name="Shinn P."/>
            <person name="Palm C.J."/>
            <person name="Southwick A.M."/>
            <person name="Wu H.C."/>
            <person name="Kim C.J."/>
            <person name="Nguyen M."/>
            <person name="Pham P.K."/>
            <person name="Cheuk R.F."/>
            <person name="Karlin-Newmann G."/>
            <person name="Liu S.X."/>
            <person name="Lam B."/>
            <person name="Sakano H."/>
            <person name="Wu T."/>
            <person name="Yu G."/>
            <person name="Miranda M."/>
            <person name="Quach H.L."/>
            <person name="Tripp M."/>
            <person name="Chang C.H."/>
            <person name="Lee J.M."/>
            <person name="Toriumi M.J."/>
            <person name="Chan M.M."/>
            <person name="Tang C.C."/>
            <person name="Onodera C.S."/>
            <person name="Deng J.M."/>
            <person name="Akiyama K."/>
            <person name="Ansari Y."/>
            <person name="Arakawa T."/>
            <person name="Banh J."/>
            <person name="Banno F."/>
            <person name="Bowser L."/>
            <person name="Brooks S.Y."/>
            <person name="Carninci P."/>
            <person name="Chao Q."/>
            <person name="Choy N."/>
            <person name="Enju A."/>
            <person name="Goldsmith A.D."/>
            <person name="Gurjal M."/>
            <person name="Hansen N.F."/>
            <person name="Hayashizaki Y."/>
            <person name="Johnson-Hopson C."/>
            <person name="Hsuan V.W."/>
            <person name="Iida K."/>
            <person name="Karnes M."/>
            <person name="Khan S."/>
            <person name="Koesema E."/>
            <person name="Ishida J."/>
            <person name="Jiang P.X."/>
            <person name="Jones T."/>
            <person name="Kawai J."/>
            <person name="Kamiya A."/>
            <person name="Meyers C."/>
            <person name="Nakajima M."/>
            <person name="Narusaka M."/>
            <person name="Seki M."/>
            <person name="Sakurai T."/>
            <person name="Satou M."/>
            <person name="Tamse R."/>
            <person name="Vaysberg M."/>
            <person name="Wallender E.K."/>
            <person name="Wong C."/>
            <person name="Yamamura Y."/>
            <person name="Yuan S."/>
            <person name="Shinozaki K."/>
            <person name="Davis R.W."/>
            <person name="Theologis A."/>
            <person name="Ecker J.R."/>
        </authorList>
    </citation>
    <scope>NUCLEOTIDE SEQUENCE [LARGE SCALE MRNA]</scope>
    <source>
        <strain>cv. Columbia</strain>
    </source>
</reference>
<reference key="5">
    <citation type="journal article" date="2006" name="Plant Physiol.">
        <title>Production of reactive oxygen species by plant NADPH oxidases.</title>
        <authorList>
            <person name="Sagi M."/>
            <person name="Fluhr R."/>
        </authorList>
    </citation>
    <scope>GENE FAMILY</scope>
    <scope>NOMENCLATURE</scope>
</reference>
<keyword id="KW-0025">Alternative splicing</keyword>
<keyword id="KW-0106">Calcium</keyword>
<keyword id="KW-0274">FAD</keyword>
<keyword id="KW-0285">Flavoprotein</keyword>
<keyword id="KW-0472">Membrane</keyword>
<keyword id="KW-0479">Metal-binding</keyword>
<keyword id="KW-0521">NADP</keyword>
<keyword id="KW-0560">Oxidoreductase</keyword>
<keyword id="KW-0575">Peroxidase</keyword>
<keyword id="KW-0597">Phosphoprotein</keyword>
<keyword id="KW-1185">Reference proteome</keyword>
<keyword id="KW-0677">Repeat</keyword>
<keyword id="KW-0812">Transmembrane</keyword>
<keyword id="KW-1133">Transmembrane helix</keyword>
<feature type="chain" id="PRO_0000313753" description="Respiratory burst oxidase homolog protein A">
    <location>
        <begin position="1"/>
        <end position="902"/>
    </location>
</feature>
<feature type="topological domain" description="Cytoplasmic" evidence="3">
    <location>
        <begin position="1"/>
        <end position="344"/>
    </location>
</feature>
<feature type="transmembrane region" description="Helical; Name=1" evidence="3">
    <location>
        <begin position="345"/>
        <end position="365"/>
    </location>
</feature>
<feature type="topological domain" description="Extracellular" evidence="3">
    <location>
        <begin position="366"/>
        <end position="380"/>
    </location>
</feature>
<feature type="transmembrane region" description="Helical; Name=2" evidence="1">
    <location>
        <begin position="381"/>
        <end position="401"/>
    </location>
</feature>
<feature type="topological domain" description="Cytoplasmic" evidence="3">
    <location>
        <begin position="402"/>
        <end position="428"/>
    </location>
</feature>
<feature type="transmembrane region" description="Helical; Name=3" evidence="1">
    <location>
        <begin position="429"/>
        <end position="449"/>
    </location>
</feature>
<feature type="topological domain" description="Extracellular" evidence="3">
    <location>
        <begin position="450"/>
        <end position="484"/>
    </location>
</feature>
<feature type="transmembrane region" description="Helical; Name=4" evidence="3">
    <location>
        <begin position="485"/>
        <end position="505"/>
    </location>
</feature>
<feature type="topological domain" description="Cytoplasmic" evidence="3">
    <location>
        <begin position="506"/>
        <end position="529"/>
    </location>
</feature>
<feature type="transmembrane region" description="Helical; Name=5" evidence="3">
    <location>
        <begin position="530"/>
        <end position="550"/>
    </location>
</feature>
<feature type="topological domain" description="Extracellular" evidence="3">
    <location>
        <begin position="551"/>
        <end position="709"/>
    </location>
</feature>
<feature type="transmembrane region" description="Helical; Name=6" evidence="3">
    <location>
        <begin position="710"/>
        <end position="730"/>
    </location>
</feature>
<feature type="topological domain" description="Cytoplasmic" evidence="3">
    <location>
        <begin position="731"/>
        <end position="902"/>
    </location>
</feature>
<feature type="domain" description="EF-hand 1" evidence="4">
    <location>
        <begin position="221"/>
        <end position="256"/>
    </location>
</feature>
<feature type="domain" description="EF-hand 2" evidence="7">
    <location>
        <begin position="265"/>
        <end position="300"/>
    </location>
</feature>
<feature type="domain" description="Ferric oxidoreductase">
    <location>
        <begin position="383"/>
        <end position="540"/>
    </location>
</feature>
<feature type="domain" description="FAD-binding FR-type" evidence="5">
    <location>
        <begin position="575"/>
        <end position="703"/>
    </location>
</feature>
<feature type="region of interest" description="Disordered" evidence="6">
    <location>
        <begin position="63"/>
        <end position="87"/>
    </location>
</feature>
<feature type="region of interest" description="Disordered" evidence="6">
    <location>
        <begin position="107"/>
        <end position="130"/>
    </location>
</feature>
<feature type="region of interest" description="EF-hand-like 1" evidence="1">
    <location>
        <begin position="163"/>
        <end position="173"/>
    </location>
</feature>
<feature type="region of interest" description="EF-hand-like 2" evidence="1">
    <location>
        <begin position="198"/>
        <end position="209"/>
    </location>
</feature>
<feature type="region of interest" description="Disordered" evidence="6">
    <location>
        <begin position="738"/>
        <end position="760"/>
    </location>
</feature>
<feature type="compositionally biased region" description="Polar residues" evidence="6">
    <location>
        <begin position="74"/>
        <end position="87"/>
    </location>
</feature>
<feature type="compositionally biased region" description="Low complexity" evidence="6">
    <location>
        <begin position="107"/>
        <end position="116"/>
    </location>
</feature>
<feature type="binding site" evidence="4">
    <location>
        <position position="234"/>
    </location>
    <ligand>
        <name>Ca(2+)</name>
        <dbReference type="ChEBI" id="CHEBI:29108"/>
    </ligand>
</feature>
<feature type="binding site" evidence="4">
    <location>
        <position position="236"/>
    </location>
    <ligand>
        <name>Ca(2+)</name>
        <dbReference type="ChEBI" id="CHEBI:29108"/>
    </ligand>
</feature>
<feature type="binding site" evidence="4">
    <location>
        <position position="238"/>
    </location>
    <ligand>
        <name>Ca(2+)</name>
        <dbReference type="ChEBI" id="CHEBI:29108"/>
    </ligand>
</feature>
<feature type="binding site" evidence="1 4">
    <location>
        <position position="240"/>
    </location>
    <ligand>
        <name>Ca(2+)</name>
        <dbReference type="ChEBI" id="CHEBI:29108"/>
    </ligand>
</feature>
<feature type="binding site" evidence="4">
    <location>
        <position position="245"/>
    </location>
    <ligand>
        <name>Ca(2+)</name>
        <dbReference type="ChEBI" id="CHEBI:29108"/>
    </ligand>
</feature>
<feature type="modified residue" description="Phosphoserine" evidence="2">
    <location>
        <position position="311"/>
    </location>
</feature>
<feature type="modified residue" description="Phosphoserine" evidence="2">
    <location>
        <position position="315"/>
    </location>
</feature>
<feature type="sequence conflict" description="In Ref. 1; AAC39475." evidence="7" ref="1">
    <original>T</original>
    <variation>N</variation>
    <location>
        <position position="166"/>
    </location>
</feature>
<feature type="sequence conflict" description="In Ref. 1; AAC39475." evidence="7" ref="1">
    <original>I</original>
    <variation>M</variation>
    <location>
        <position position="207"/>
    </location>
</feature>
<feature type="sequence conflict" description="In Ref. 1; AAC39475." evidence="7" ref="1">
    <original>G</original>
    <variation>S</variation>
    <location>
        <position position="307"/>
    </location>
</feature>
<dbReference type="EC" id="1.11.1.-"/>
<dbReference type="EC" id="1.6.3.-"/>
<dbReference type="EMBL" id="AF055353">
    <property type="protein sequence ID" value="AAC39475.1"/>
    <property type="molecule type" value="Genomic_DNA"/>
</dbReference>
<dbReference type="EMBL" id="AL163912">
    <property type="protein sequence ID" value="CAB87928.1"/>
    <property type="molecule type" value="Genomic_DNA"/>
</dbReference>
<dbReference type="EMBL" id="CP002688">
    <property type="protein sequence ID" value="AED91151.1"/>
    <property type="molecule type" value="Genomic_DNA"/>
</dbReference>
<dbReference type="EMBL" id="BT003857">
    <property type="protein sequence ID" value="AAO41907.1"/>
    <property type="molecule type" value="mRNA"/>
</dbReference>
<dbReference type="PIR" id="T49878">
    <property type="entry name" value="T49878"/>
</dbReference>
<dbReference type="RefSeq" id="NP_196356.1">
    <molecule id="O81209-1"/>
    <property type="nucleotide sequence ID" value="NM_120821.2"/>
</dbReference>
<dbReference type="SMR" id="O81209"/>
<dbReference type="FunCoup" id="O81209">
    <property type="interactions" value="517"/>
</dbReference>
<dbReference type="STRING" id="3702.O81209"/>
<dbReference type="PeroxiBase" id="3282">
    <property type="entry name" value="AtRboh01"/>
</dbReference>
<dbReference type="TCDB" id="5.B.1.1.8">
    <property type="family name" value="the phagocyte (gp91(phox)) nadph oxidase family"/>
</dbReference>
<dbReference type="GlyGen" id="O81209">
    <property type="glycosylation" value="1 site"/>
</dbReference>
<dbReference type="iPTMnet" id="O81209"/>
<dbReference type="PaxDb" id="3702-AT5G07390.1"/>
<dbReference type="ProteomicsDB" id="225940">
    <molecule id="O81209-1"/>
</dbReference>
<dbReference type="EnsemblPlants" id="AT5G07390.1">
    <molecule id="O81209-1"/>
    <property type="protein sequence ID" value="AT5G07390.1"/>
    <property type="gene ID" value="AT5G07390"/>
</dbReference>
<dbReference type="GeneID" id="830630"/>
<dbReference type="Gramene" id="AT5G07390.1">
    <molecule id="O81209-1"/>
    <property type="protein sequence ID" value="AT5G07390.1"/>
    <property type="gene ID" value="AT5G07390"/>
</dbReference>
<dbReference type="KEGG" id="ath:AT5G07390"/>
<dbReference type="Araport" id="AT5G07390"/>
<dbReference type="TAIR" id="AT5G07390">
    <property type="gene designation" value="RBOHA"/>
</dbReference>
<dbReference type="eggNOG" id="KOG0039">
    <property type="taxonomic scope" value="Eukaryota"/>
</dbReference>
<dbReference type="InParanoid" id="O81209"/>
<dbReference type="OMA" id="YGYIMIE"/>
<dbReference type="PhylomeDB" id="O81209"/>
<dbReference type="BioCyc" id="ARA:AT5G07390-MONOMER"/>
<dbReference type="PRO" id="PR:O81209"/>
<dbReference type="Proteomes" id="UP000006548">
    <property type="component" value="Chromosome 5"/>
</dbReference>
<dbReference type="ExpressionAtlas" id="O81209">
    <property type="expression patterns" value="baseline and differential"/>
</dbReference>
<dbReference type="GO" id="GO:0016020">
    <property type="term" value="C:membrane"/>
    <property type="evidence" value="ECO:0007669"/>
    <property type="project" value="UniProtKB-SubCell"/>
</dbReference>
<dbReference type="GO" id="GO:0005509">
    <property type="term" value="F:calcium ion binding"/>
    <property type="evidence" value="ECO:0000314"/>
    <property type="project" value="TAIR"/>
</dbReference>
<dbReference type="GO" id="GO:0050664">
    <property type="term" value="F:oxidoreductase activity, acting on NAD(P)H, oxygen as acceptor"/>
    <property type="evidence" value="ECO:0007669"/>
    <property type="project" value="InterPro"/>
</dbReference>
<dbReference type="GO" id="GO:0004601">
    <property type="term" value="F:peroxidase activity"/>
    <property type="evidence" value="ECO:0007669"/>
    <property type="project" value="UniProtKB-KW"/>
</dbReference>
<dbReference type="CDD" id="cd00051">
    <property type="entry name" value="EFh"/>
    <property type="match status" value="1"/>
</dbReference>
<dbReference type="CDD" id="cd06186">
    <property type="entry name" value="NOX_Duox_like_FAD_NADP"/>
    <property type="match status" value="1"/>
</dbReference>
<dbReference type="FunFam" id="1.10.238.10:FF:000049">
    <property type="entry name" value="Respiratory burst oxidase homolog A"/>
    <property type="match status" value="1"/>
</dbReference>
<dbReference type="FunFam" id="2.40.30.10:FF:000019">
    <property type="entry name" value="Respiratory burst oxidase homolog A"/>
    <property type="match status" value="1"/>
</dbReference>
<dbReference type="FunFam" id="3.40.50.80:FF:000007">
    <property type="entry name" value="Respiratory burst oxidase protein A"/>
    <property type="match status" value="1"/>
</dbReference>
<dbReference type="Gene3D" id="1.10.238.10">
    <property type="entry name" value="EF-hand"/>
    <property type="match status" value="1"/>
</dbReference>
<dbReference type="Gene3D" id="3.40.50.80">
    <property type="entry name" value="Nucleotide-binding domain of ferredoxin-NADP reductase (FNR) module"/>
    <property type="match status" value="1"/>
</dbReference>
<dbReference type="Gene3D" id="2.40.30.10">
    <property type="entry name" value="Translation factors"/>
    <property type="match status" value="1"/>
</dbReference>
<dbReference type="InterPro" id="IPR000778">
    <property type="entry name" value="Cyt_b245_heavy_chain"/>
</dbReference>
<dbReference type="InterPro" id="IPR011992">
    <property type="entry name" value="EF-hand-dom_pair"/>
</dbReference>
<dbReference type="InterPro" id="IPR018247">
    <property type="entry name" value="EF_Hand_1_Ca_BS"/>
</dbReference>
<dbReference type="InterPro" id="IPR002048">
    <property type="entry name" value="EF_hand_dom"/>
</dbReference>
<dbReference type="InterPro" id="IPR013112">
    <property type="entry name" value="FAD-bd_8"/>
</dbReference>
<dbReference type="InterPro" id="IPR017927">
    <property type="entry name" value="FAD-bd_FR_type"/>
</dbReference>
<dbReference type="InterPro" id="IPR013130">
    <property type="entry name" value="Fe3_Rdtase_TM_dom"/>
</dbReference>
<dbReference type="InterPro" id="IPR013121">
    <property type="entry name" value="Fe_red_NAD-bd_6"/>
</dbReference>
<dbReference type="InterPro" id="IPR039261">
    <property type="entry name" value="FNR_nucleotide-bd"/>
</dbReference>
<dbReference type="InterPro" id="IPR013623">
    <property type="entry name" value="NADPH_Ox"/>
</dbReference>
<dbReference type="InterPro" id="IPR050369">
    <property type="entry name" value="RBOH/FRE"/>
</dbReference>
<dbReference type="InterPro" id="IPR017938">
    <property type="entry name" value="Riboflavin_synthase-like_b-brl"/>
</dbReference>
<dbReference type="PANTHER" id="PTHR11972">
    <property type="entry name" value="NADPH OXIDASE"/>
    <property type="match status" value="1"/>
</dbReference>
<dbReference type="PANTHER" id="PTHR11972:SF154">
    <property type="entry name" value="RESPIRATORY BURST OXIDASE HOMOLOG PROTEIN A"/>
    <property type="match status" value="1"/>
</dbReference>
<dbReference type="Pfam" id="PF08022">
    <property type="entry name" value="FAD_binding_8"/>
    <property type="match status" value="1"/>
</dbReference>
<dbReference type="Pfam" id="PF01794">
    <property type="entry name" value="Ferric_reduct"/>
    <property type="match status" value="1"/>
</dbReference>
<dbReference type="Pfam" id="PF08030">
    <property type="entry name" value="NAD_binding_6"/>
    <property type="match status" value="1"/>
</dbReference>
<dbReference type="Pfam" id="PF08414">
    <property type="entry name" value="NADPH_Ox"/>
    <property type="match status" value="1"/>
</dbReference>
<dbReference type="PRINTS" id="PR00466">
    <property type="entry name" value="GP91PHOX"/>
</dbReference>
<dbReference type="SFLD" id="SFLDG01169">
    <property type="entry name" value="NADPH_oxidase_subgroup_(NOX)"/>
    <property type="match status" value="1"/>
</dbReference>
<dbReference type="SUPFAM" id="SSF47473">
    <property type="entry name" value="EF-hand"/>
    <property type="match status" value="1"/>
</dbReference>
<dbReference type="SUPFAM" id="SSF52343">
    <property type="entry name" value="Ferredoxin reductase-like, C-terminal NADP-linked domain"/>
    <property type="match status" value="1"/>
</dbReference>
<dbReference type="SUPFAM" id="SSF63380">
    <property type="entry name" value="Riboflavin synthase domain-like"/>
    <property type="match status" value="1"/>
</dbReference>
<dbReference type="PROSITE" id="PS00018">
    <property type="entry name" value="EF_HAND_1"/>
    <property type="match status" value="1"/>
</dbReference>
<dbReference type="PROSITE" id="PS50222">
    <property type="entry name" value="EF_HAND_2"/>
    <property type="match status" value="1"/>
</dbReference>
<dbReference type="PROSITE" id="PS51384">
    <property type="entry name" value="FAD_FR"/>
    <property type="match status" value="1"/>
</dbReference>
<organism>
    <name type="scientific">Arabidopsis thaliana</name>
    <name type="common">Mouse-ear cress</name>
    <dbReference type="NCBI Taxonomy" id="3702"/>
    <lineage>
        <taxon>Eukaryota</taxon>
        <taxon>Viridiplantae</taxon>
        <taxon>Streptophyta</taxon>
        <taxon>Embryophyta</taxon>
        <taxon>Tracheophyta</taxon>
        <taxon>Spermatophyta</taxon>
        <taxon>Magnoliopsida</taxon>
        <taxon>eudicotyledons</taxon>
        <taxon>Gunneridae</taxon>
        <taxon>Pentapetalae</taxon>
        <taxon>rosids</taxon>
        <taxon>malvids</taxon>
        <taxon>Brassicales</taxon>
        <taxon>Brassicaceae</taxon>
        <taxon>Camelineae</taxon>
        <taxon>Arabidopsis</taxon>
    </lineage>
</organism>
<sequence length="902" mass="102935">MMNRSEMQKLGFEHVRYYTESPYNRGESSANVATTSNYYGEDEPYVEITLDIHDDSVSVYGLKSPNHRGAGSNYEDQSLLRQGRSGRSNSVLKRLASSVSTGITRVASSVSSSSARKPPRPQLAKLRRSKSRAELALKGLKFITKTDGVTGWPEVEKRFYVMTMTTNGLLHRSRFGECIGMKSTEFALALFDALARRENVSGDSININELKEFWKQITDQDFDSRLRTFFAMVDKDSDGRLNEAEVREIITLSASANELDNIRRQADEYAALIMEELDPYHYGYIMIENLEILLLQAPMQDVRDGEGKKLSKMLSQNLMVPQSRNLGARFCRGMKYFLFDNWKRVWVMALWIGAMAGLFTWKFMEYRKRSAYEVMGVCVCIAKGAAETLKLNMAMILLPVCRNTITWLRTKTKLSAIVPFDDSLNFHKVIAIGISVGVGIHATSHLACDFPRLIAADEDQYEPMEKYFGPQTKRYLDFVQSVEGVTGIGMVVLMTIAFTLATTWFRRNKLNLPGPLKKITGFNAFWYSHHLFVIVYSLLVVHGFYVYLIIEPWYKKTTWMYLMVPVVLYLCERLIRAFRSSVEAVSVLKVAVLPGNVLSLHLSRPSNFRYKSGQYMYLNCSAVSTLEWHPFSITSAPGDDYLSVHIRVLGDWTKQLRSLFSEVCKPRPPDEHRLNRADSKHWDYIPDFPRILIDGPYGAPAQDYKKFEVVLLVGLGIGATPMISIVSDIINNLKGVEEGSNRRQSPIHNMVTPPVSPSRKSETFRTKRAYFYWVTREQGSFDWFKNVMDEVTETDRKNVIELHNYCTSVYEEGDARSALITMLQSLNHAKHGVDVVSGTRVMSHFARPNWRSVFKRIAVNHPKTRVGVFYCGAAGLVKELRHLSLDFSHKTSTKFIFHKENF</sequence>
<protein>
    <recommendedName>
        <fullName>Respiratory burst oxidase homolog protein A</fullName>
        <ecNumber>1.11.1.-</ecNumber>
        <ecNumber>1.6.3.-</ecNumber>
    </recommendedName>
    <alternativeName>
        <fullName>NADPH oxidase RBOHA</fullName>
        <shortName>AtRBOHA</shortName>
    </alternativeName>
</protein>